<reference key="1">
    <citation type="journal article" date="1992" name="J. Biol. Chem.">
        <title>The polyphosphate kinase gene of Escherichia coli. Isolation and sequence of the ppk gene and membrane location of the protein.</title>
        <authorList>
            <person name="Akiyama M."/>
            <person name="Crooke E."/>
            <person name="Kornberg A."/>
        </authorList>
    </citation>
    <scope>NUCLEOTIDE SEQUENCE [GENOMIC DNA]</scope>
    <scope>PARTIAL PROTEIN SEQUENCE</scope>
    <scope>CATALYTIC ACTIVITY</scope>
    <scope>SUBUNIT</scope>
    <scope>SUBCELLULAR LOCATION</scope>
    <source>
        <strain>K12</strain>
    </source>
</reference>
<reference key="2">
    <citation type="journal article" date="1997" name="DNA Res.">
        <title>Construction of a contiguous 874-kb sequence of the Escherichia coli-K12 genome corresponding to 50.0-68.8 min on the linkage map and analysis of its sequence features.</title>
        <authorList>
            <person name="Yamamoto Y."/>
            <person name="Aiba H."/>
            <person name="Baba T."/>
            <person name="Hayashi K."/>
            <person name="Inada T."/>
            <person name="Isono K."/>
            <person name="Itoh T."/>
            <person name="Kimura S."/>
            <person name="Kitagawa M."/>
            <person name="Makino K."/>
            <person name="Miki T."/>
            <person name="Mitsuhashi N."/>
            <person name="Mizobuchi K."/>
            <person name="Mori H."/>
            <person name="Nakade S."/>
            <person name="Nakamura Y."/>
            <person name="Nashimoto H."/>
            <person name="Oshima T."/>
            <person name="Oyama S."/>
            <person name="Saito N."/>
            <person name="Sampei G."/>
            <person name="Satoh Y."/>
            <person name="Sivasundaram S."/>
            <person name="Tagami H."/>
            <person name="Takahashi H."/>
            <person name="Takeda J."/>
            <person name="Takemoto K."/>
            <person name="Uehara K."/>
            <person name="Wada C."/>
            <person name="Yamagata S."/>
            <person name="Horiuchi T."/>
        </authorList>
    </citation>
    <scope>NUCLEOTIDE SEQUENCE [LARGE SCALE GENOMIC DNA]</scope>
    <source>
        <strain>K12 / W3110 / ATCC 27325 / DSM 5911</strain>
    </source>
</reference>
<reference key="3">
    <citation type="journal article" date="1997" name="Science">
        <title>The complete genome sequence of Escherichia coli K-12.</title>
        <authorList>
            <person name="Blattner F.R."/>
            <person name="Plunkett G. III"/>
            <person name="Bloch C.A."/>
            <person name="Perna N.T."/>
            <person name="Burland V."/>
            <person name="Riley M."/>
            <person name="Collado-Vides J."/>
            <person name="Glasner J.D."/>
            <person name="Rode C.K."/>
            <person name="Mayhew G.F."/>
            <person name="Gregor J."/>
            <person name="Davis N.W."/>
            <person name="Kirkpatrick H.A."/>
            <person name="Goeden M.A."/>
            <person name="Rose D.J."/>
            <person name="Mau B."/>
            <person name="Shao Y."/>
        </authorList>
    </citation>
    <scope>NUCLEOTIDE SEQUENCE [LARGE SCALE GENOMIC DNA]</scope>
    <source>
        <strain>K12 / MG1655 / ATCC 47076</strain>
    </source>
</reference>
<reference key="4">
    <citation type="journal article" date="2006" name="Mol. Syst. Biol.">
        <title>Highly accurate genome sequences of Escherichia coli K-12 strains MG1655 and W3110.</title>
        <authorList>
            <person name="Hayashi K."/>
            <person name="Morooka N."/>
            <person name="Yamamoto Y."/>
            <person name="Fujita K."/>
            <person name="Isono K."/>
            <person name="Choi S."/>
            <person name="Ohtsubo E."/>
            <person name="Baba T."/>
            <person name="Wanner B.L."/>
            <person name="Mori H."/>
            <person name="Horiuchi T."/>
        </authorList>
    </citation>
    <scope>NUCLEOTIDE SEQUENCE [LARGE SCALE GENOMIC DNA]</scope>
    <source>
        <strain>K12 / W3110 / ATCC 27325 / DSM 5911</strain>
    </source>
</reference>
<reference key="5">
    <citation type="journal article" date="1987" name="J. Biol. Chem.">
        <title>Identification and nucleotide sequence of a gene encoding 5'-phosphoribosylglycinamide transformylase in Escherichia coli K12.</title>
        <authorList>
            <person name="Smith J.M."/>
            <person name="Daum H.A. III"/>
        </authorList>
    </citation>
    <scope>NUCLEOTIDE SEQUENCE [GENOMIC DNA] OF 1-91</scope>
    <source>
        <strain>K12</strain>
    </source>
</reference>
<reference key="6">
    <citation type="journal article" date="1993" name="J. Biol. Chem.">
        <title>An exopolyphosphatase of Escherichia coli. The enzyme and its ppx gene in a polyphosphate operon.</title>
        <authorList>
            <person name="Akiyama M."/>
            <person name="Crooke E."/>
            <person name="Kornberg A."/>
        </authorList>
    </citation>
    <scope>NUCLEOTIDE SEQUENCE [GENOMIC DNA] OF 679-688</scope>
    <source>
        <strain>K12</strain>
    </source>
</reference>
<reference key="7">
    <citation type="journal article" date="1996" name="Proc. Natl. Acad. Sci. U.S.A.">
        <title>Phosphohistidyl active sites in polyphosphate kinase of Escherichia coli.</title>
        <authorList>
            <person name="Kumble K.D."/>
            <person name="Ahn K."/>
            <person name="Kornberg A."/>
        </authorList>
    </citation>
    <scope>PROTEIN SEQUENCE OF 434-437</scope>
    <scope>FUNCTION</scope>
    <scope>CATALYTIC ACTIVITY</scope>
    <scope>ACTIVE SITE</scope>
    <scope>PHOSPHORYLATION</scope>
    <scope>MUTAGENESIS OF HIS-424; HIS-435; HIS-454 AND HIS-592</scope>
</reference>
<reference key="8">
    <citation type="journal article" date="2000" name="J. Biol. Chem.">
        <title>The multiple activities of polyphosphate kinase of Escherichia coli and their subunit structure determined by radiation target analysis.</title>
        <authorList>
            <person name="Tzeng C.M."/>
            <person name="Kornberg A."/>
        </authorList>
    </citation>
    <scope>FUNCTION</scope>
    <scope>CATALYTIC ACTIVITY</scope>
    <scope>SUBUNIT</scope>
    <scope>COFACTOR</scope>
    <scope>MUTAGENESIS OF ARG-375; SER-380; PHE-488; PRO-507; ARG-564; ARG-621 AND GLN-674</scope>
</reference>
<reference evidence="8 9" key="9">
    <citation type="journal article" date="2005" name="EMBO Rep.">
        <title>Crystal structure of a polyphosphate kinase and its implications for polyphosphate synthesis.</title>
        <authorList>
            <person name="Zhu Y."/>
            <person name="Huang W."/>
            <person name="Lee S.S."/>
            <person name="Xu W."/>
        </authorList>
    </citation>
    <scope>X-RAY CRYSTALLOGRAPHY (2.50 ANGSTROMS) IN COMPLEX WITH ATP ANALOG AND MAGNESIUM</scope>
    <scope>SUBUNIT</scope>
    <scope>ACTIVE SITE</scope>
</reference>
<organism>
    <name type="scientific">Escherichia coli (strain K12)</name>
    <dbReference type="NCBI Taxonomy" id="83333"/>
    <lineage>
        <taxon>Bacteria</taxon>
        <taxon>Pseudomonadati</taxon>
        <taxon>Pseudomonadota</taxon>
        <taxon>Gammaproteobacteria</taxon>
        <taxon>Enterobacterales</taxon>
        <taxon>Enterobacteriaceae</taxon>
        <taxon>Escherichia</taxon>
    </lineage>
</organism>
<sequence>MGQEKLYIEKELSWLSFNERVLQEAADKSNPLIERMRFLGIYSNNLDEFYKVRFAELKRRIIISEEQGSNSHSRHLLGKIQSRVLKADQEFDGLYNELLLEMARNQIFLINERQLSVNQQNWLRHYFKQYLRQHITPILINPDTDLVQFLKDDYTYLAVEIIRGDTIRYALLEIPSDKVPRFVNLPPEAPRRRKPMILLDNILRYCLDDIFKGFFDYDALNAYSMKMTRDAEYDLVHEMEASLMELMSSSLKQRLTAEPVRFVYQRDMPNALVEVLREKLTISRYDSIVPGGRYHNFKDFINFPNVGKANLVNKPLPRLRHIWFDKAQFRNGFDAIRERDVLLYYPYHTFEHVLELLRQASFDPSVLAIKINIYRVAKDSRIIDSMIHAAHNGKKVTVVVELQARFDEEANIHWAKRLTEAGVHVIFSAPGLKIHAKLFLISRKENGEVVRYAHIGTGNFNEKTARLYTDYSLLTADARITNEVRRVFNFIENPYRPVTFDYLMVSPQNSRRLLYEMVDREIANAQQGLPSGITLKLNNLVDKGLVDRLYAASSSGVPVNLLVRGMCSLIPNLEGISDNIRAISIVDRYLEHDRVYIFENGGDKKVYLSSADWMTRNIDYRIEVATPLLDPRLKQRVLDIIDILFSDTVKARYIDKELSNRYVPRGNRRKVRAQLAIYDYIKSLEQPE</sequence>
<keyword id="KW-0002">3D-structure</keyword>
<keyword id="KW-0067">ATP-binding</keyword>
<keyword id="KW-1003">Cell membrane</keyword>
<keyword id="KW-0903">Direct protein sequencing</keyword>
<keyword id="KW-0418">Kinase</keyword>
<keyword id="KW-0460">Magnesium</keyword>
<keyword id="KW-0472">Membrane</keyword>
<keyword id="KW-0479">Metal-binding</keyword>
<keyword id="KW-0547">Nucleotide-binding</keyword>
<keyword id="KW-0597">Phosphoprotein</keyword>
<keyword id="KW-1185">Reference proteome</keyword>
<keyword id="KW-0808">Transferase</keyword>
<proteinExistence type="evidence at protein level"/>
<protein>
    <recommendedName>
        <fullName evidence="1">Polyphosphate kinase</fullName>
        <ecNumber evidence="1 2 3 5">2.7.4.1</ecNumber>
    </recommendedName>
    <alternativeName>
        <fullName evidence="1">ATP-polyphosphate phosphotransferase</fullName>
    </alternativeName>
    <alternativeName>
        <fullName evidence="1">Polyphosphoric acid kinase</fullName>
    </alternativeName>
</protein>
<comment type="function">
    <text evidence="2 5">Catalyzes the reversible transfer of the terminal phosphate of ATP to form a long-chain polyphosphate (polyP). Can form linear polymers of orthophosphate with chain lengths up to 1000 or more. Can use GTP instead of ATP, but the efficiency of GTP is 5% that of ATP. Also exhibits several other enzymatic activities, which include: ATP synthesis from polyP in the presence of excess ADP, general nucleoside-diphosphate kinase activity, linear guanosine 5'-tetraphosphate (ppppG) synthesis and autophosphorylation.</text>
</comment>
<comment type="catalytic activity">
    <reaction evidence="1 2 3 5">
        <text>[phosphate](n) + ATP = [phosphate](n+1) + ADP</text>
        <dbReference type="Rhea" id="RHEA:19573"/>
        <dbReference type="Rhea" id="RHEA-COMP:9859"/>
        <dbReference type="Rhea" id="RHEA-COMP:14280"/>
        <dbReference type="ChEBI" id="CHEBI:16838"/>
        <dbReference type="ChEBI" id="CHEBI:30616"/>
        <dbReference type="ChEBI" id="CHEBI:456216"/>
        <dbReference type="EC" id="2.7.4.1"/>
    </reaction>
</comment>
<comment type="cofactor">
    <cofactor evidence="1 2">
        <name>Mg(2+)</name>
        <dbReference type="ChEBI" id="CHEBI:18420"/>
    </cofactor>
</comment>
<comment type="subunit">
    <text evidence="2 3 4">Homotetramer (PubMed:1331061). Dimer of dimers (PubMed:10660553, PubMed:15947782). The diverse functions of this enzyme involve different subunit organizations and conformations (PubMed:10660553).</text>
</comment>
<comment type="subcellular location">
    <subcellularLocation>
        <location evidence="3">Cell membrane</location>
        <topology evidence="3">Peripheral membrane protein</topology>
    </subcellularLocation>
    <text evidence="3">Associated with the outer membrane in overproducing cells.</text>
</comment>
<comment type="PTM">
    <text evidence="1 5">An intermediate of this reaction is the autophosphorylated ppk in which a phosphate is covalently linked to a histidine residue through a N-P bond.</text>
</comment>
<comment type="similarity">
    <text evidence="1">Belongs to the polyphosphate kinase 1 (PPK1) family.</text>
</comment>
<comment type="sequence caution" evidence="6">
    <conflict type="erroneous initiation">
        <sequence resource="EMBL-CDS" id="AAA83900"/>
    </conflict>
</comment>
<dbReference type="EC" id="2.7.4.1" evidence="1 2 3 5"/>
<dbReference type="EMBL" id="L03719">
    <property type="status" value="NOT_ANNOTATED_CDS"/>
    <property type="molecule type" value="Genomic_DNA"/>
</dbReference>
<dbReference type="EMBL" id="U00096">
    <property type="protein sequence ID" value="AAC75554.1"/>
    <property type="molecule type" value="Genomic_DNA"/>
</dbReference>
<dbReference type="EMBL" id="AP009048">
    <property type="protein sequence ID" value="BAA16389.1"/>
    <property type="molecule type" value="Genomic_DNA"/>
</dbReference>
<dbReference type="EMBL" id="M13747">
    <property type="protein sequence ID" value="AAA83900.1"/>
    <property type="status" value="ALT_INIT"/>
    <property type="molecule type" value="Genomic_DNA"/>
</dbReference>
<dbReference type="EMBL" id="L06129">
    <property type="status" value="NOT_ANNOTATED_CDS"/>
    <property type="molecule type" value="Genomic_DNA"/>
</dbReference>
<dbReference type="PIR" id="A44306">
    <property type="entry name" value="A44306"/>
</dbReference>
<dbReference type="RefSeq" id="NP_416996.1">
    <property type="nucleotide sequence ID" value="NC_000913.3"/>
</dbReference>
<dbReference type="PDB" id="1XDO">
    <property type="method" value="X-ray"/>
    <property type="resolution" value="3.00 A"/>
    <property type="chains" value="A/B=2-688"/>
</dbReference>
<dbReference type="PDB" id="1XDP">
    <property type="method" value="X-ray"/>
    <property type="resolution" value="2.50 A"/>
    <property type="chains" value="A/B=2-688"/>
</dbReference>
<dbReference type="PDBsum" id="1XDO"/>
<dbReference type="PDBsum" id="1XDP"/>
<dbReference type="SMR" id="P0A7B1"/>
<dbReference type="BioGRID" id="4261066">
    <property type="interactions" value="83"/>
</dbReference>
<dbReference type="BioGRID" id="851310">
    <property type="interactions" value="6"/>
</dbReference>
<dbReference type="DIP" id="DIP-36218N"/>
<dbReference type="FunCoup" id="P0A7B1">
    <property type="interactions" value="342"/>
</dbReference>
<dbReference type="IntAct" id="P0A7B1">
    <property type="interactions" value="29"/>
</dbReference>
<dbReference type="STRING" id="511145.b2501"/>
<dbReference type="jPOST" id="P0A7B1"/>
<dbReference type="PaxDb" id="511145-b2501"/>
<dbReference type="EnsemblBacteria" id="AAC75554">
    <property type="protein sequence ID" value="AAC75554"/>
    <property type="gene ID" value="b2501"/>
</dbReference>
<dbReference type="GeneID" id="946971"/>
<dbReference type="KEGG" id="ecj:JW2486"/>
<dbReference type="KEGG" id="eco:b2501"/>
<dbReference type="KEGG" id="ecoc:C3026_13870"/>
<dbReference type="PATRIC" id="fig|1411691.4.peg.4237"/>
<dbReference type="EchoBASE" id="EB1472"/>
<dbReference type="eggNOG" id="COG0855">
    <property type="taxonomic scope" value="Bacteria"/>
</dbReference>
<dbReference type="HOGENOM" id="CLU_009678_6_1_6"/>
<dbReference type="InParanoid" id="P0A7B1"/>
<dbReference type="OMA" id="MTLYRVG"/>
<dbReference type="OrthoDB" id="9761456at2"/>
<dbReference type="PhylomeDB" id="P0A7B1"/>
<dbReference type="BioCyc" id="EcoCyc:PPK-MONOMER"/>
<dbReference type="BioCyc" id="MetaCyc:PPK-MONOMER"/>
<dbReference type="BRENDA" id="2.7.4.1">
    <property type="organism ID" value="2026"/>
</dbReference>
<dbReference type="SABIO-RK" id="P0A7B1"/>
<dbReference type="EvolutionaryTrace" id="P0A7B1"/>
<dbReference type="PRO" id="PR:P0A7B1"/>
<dbReference type="Proteomes" id="UP000000625">
    <property type="component" value="Chromosome"/>
</dbReference>
<dbReference type="GO" id="GO:0005829">
    <property type="term" value="C:cytosol"/>
    <property type="evidence" value="ECO:0007005"/>
    <property type="project" value="UniProtKB"/>
</dbReference>
<dbReference type="GO" id="GO:0016020">
    <property type="term" value="C:membrane"/>
    <property type="evidence" value="ECO:0000318"/>
    <property type="project" value="GO_Central"/>
</dbReference>
<dbReference type="GO" id="GO:0031241">
    <property type="term" value="C:periplasmic side of cell outer membrane"/>
    <property type="evidence" value="ECO:0000314"/>
    <property type="project" value="EcoCyc"/>
</dbReference>
<dbReference type="GO" id="GO:0005886">
    <property type="term" value="C:plasma membrane"/>
    <property type="evidence" value="ECO:0007669"/>
    <property type="project" value="UniProtKB-SubCell"/>
</dbReference>
<dbReference type="GO" id="GO:0009358">
    <property type="term" value="C:polyphosphate kinase complex"/>
    <property type="evidence" value="ECO:0000314"/>
    <property type="project" value="EcoCyc"/>
</dbReference>
<dbReference type="GO" id="GO:0005524">
    <property type="term" value="F:ATP binding"/>
    <property type="evidence" value="ECO:0007669"/>
    <property type="project" value="UniProtKB-KW"/>
</dbReference>
<dbReference type="GO" id="GO:0016778">
    <property type="term" value="F:diphosphotransferase activity"/>
    <property type="evidence" value="ECO:0000314"/>
    <property type="project" value="EcoCyc"/>
</dbReference>
<dbReference type="GO" id="GO:0046872">
    <property type="term" value="F:metal ion binding"/>
    <property type="evidence" value="ECO:0007669"/>
    <property type="project" value="UniProtKB-KW"/>
</dbReference>
<dbReference type="GO" id="GO:0016776">
    <property type="term" value="F:phosphotransferase activity, phosphate group as acceptor"/>
    <property type="evidence" value="ECO:0000314"/>
    <property type="project" value="EcoCyc"/>
</dbReference>
<dbReference type="GO" id="GO:0008976">
    <property type="term" value="F:polyphosphate kinase activity"/>
    <property type="evidence" value="ECO:0000314"/>
    <property type="project" value="EcoCyc"/>
</dbReference>
<dbReference type="GO" id="GO:0043751">
    <property type="term" value="F:polyphosphate:AMP phosphotransferase activity"/>
    <property type="evidence" value="ECO:0000315"/>
    <property type="project" value="EcoCyc"/>
</dbReference>
<dbReference type="GO" id="GO:0042803">
    <property type="term" value="F:protein homodimerization activity"/>
    <property type="evidence" value="ECO:0000314"/>
    <property type="project" value="EcoCyc"/>
</dbReference>
<dbReference type="GO" id="GO:0006799">
    <property type="term" value="P:polyphosphate biosynthetic process"/>
    <property type="evidence" value="ECO:0000314"/>
    <property type="project" value="EcoCyc"/>
</dbReference>
<dbReference type="CDD" id="cd09167">
    <property type="entry name" value="PLDc_EcPPK1_C2_like"/>
    <property type="match status" value="1"/>
</dbReference>
<dbReference type="CDD" id="cd09114">
    <property type="entry name" value="PLDc_PPK1_C1"/>
    <property type="match status" value="1"/>
</dbReference>
<dbReference type="FunFam" id="1.20.58.310:FF:000001">
    <property type="entry name" value="Polyphosphate kinase"/>
    <property type="match status" value="1"/>
</dbReference>
<dbReference type="FunFam" id="3.30.1840.10:FF:000001">
    <property type="entry name" value="Polyphosphate kinase"/>
    <property type="match status" value="1"/>
</dbReference>
<dbReference type="FunFam" id="3.30.870.10:FF:000001">
    <property type="entry name" value="Polyphosphate kinase"/>
    <property type="match status" value="1"/>
</dbReference>
<dbReference type="FunFam" id="3.30.870.10:FF:000007">
    <property type="entry name" value="Polyphosphate kinase"/>
    <property type="match status" value="1"/>
</dbReference>
<dbReference type="Gene3D" id="3.30.870.10">
    <property type="entry name" value="Endonuclease Chain A"/>
    <property type="match status" value="2"/>
</dbReference>
<dbReference type="Gene3D" id="3.30.1840.10">
    <property type="entry name" value="Polyphosphate kinase middle domain"/>
    <property type="match status" value="1"/>
</dbReference>
<dbReference type="Gene3D" id="1.20.58.310">
    <property type="entry name" value="Polyphosphate kinase N-terminal domain"/>
    <property type="match status" value="1"/>
</dbReference>
<dbReference type="HAMAP" id="MF_00347">
    <property type="entry name" value="Polyphosphate_kinase"/>
    <property type="match status" value="1"/>
</dbReference>
<dbReference type="InterPro" id="IPR001736">
    <property type="entry name" value="PLipase_D/transphosphatidylase"/>
</dbReference>
<dbReference type="InterPro" id="IPR003414">
    <property type="entry name" value="PP_kinase"/>
</dbReference>
<dbReference type="InterPro" id="IPR041108">
    <property type="entry name" value="PP_kinase_C_1"/>
</dbReference>
<dbReference type="InterPro" id="IPR024953">
    <property type="entry name" value="PP_kinase_middle"/>
</dbReference>
<dbReference type="InterPro" id="IPR036830">
    <property type="entry name" value="PP_kinase_middle_dom_sf"/>
</dbReference>
<dbReference type="InterPro" id="IPR025200">
    <property type="entry name" value="PPK_C_dom2"/>
</dbReference>
<dbReference type="InterPro" id="IPR025198">
    <property type="entry name" value="PPK_N_dom"/>
</dbReference>
<dbReference type="InterPro" id="IPR036832">
    <property type="entry name" value="PPK_N_dom_sf"/>
</dbReference>
<dbReference type="NCBIfam" id="TIGR03705">
    <property type="entry name" value="poly_P_kin"/>
    <property type="match status" value="1"/>
</dbReference>
<dbReference type="NCBIfam" id="NF003917">
    <property type="entry name" value="PRK05443.1-1"/>
    <property type="match status" value="1"/>
</dbReference>
<dbReference type="PANTHER" id="PTHR30218">
    <property type="entry name" value="POLYPHOSPHATE KINASE"/>
    <property type="match status" value="1"/>
</dbReference>
<dbReference type="PANTHER" id="PTHR30218:SF0">
    <property type="entry name" value="POLYPHOSPHATE KINASE"/>
    <property type="match status" value="1"/>
</dbReference>
<dbReference type="Pfam" id="PF02503">
    <property type="entry name" value="PP_kinase"/>
    <property type="match status" value="1"/>
</dbReference>
<dbReference type="Pfam" id="PF13090">
    <property type="entry name" value="PP_kinase_C"/>
    <property type="match status" value="1"/>
</dbReference>
<dbReference type="Pfam" id="PF17941">
    <property type="entry name" value="PP_kinase_C_1"/>
    <property type="match status" value="1"/>
</dbReference>
<dbReference type="Pfam" id="PF13089">
    <property type="entry name" value="PP_kinase_N"/>
    <property type="match status" value="1"/>
</dbReference>
<dbReference type="PIRSF" id="PIRSF015589">
    <property type="entry name" value="PP_kinase"/>
    <property type="match status" value="1"/>
</dbReference>
<dbReference type="SUPFAM" id="SSF56024">
    <property type="entry name" value="Phospholipase D/nuclease"/>
    <property type="match status" value="2"/>
</dbReference>
<dbReference type="SUPFAM" id="SSF143724">
    <property type="entry name" value="PHP14-like"/>
    <property type="match status" value="1"/>
</dbReference>
<dbReference type="SUPFAM" id="SSF140356">
    <property type="entry name" value="PPK N-terminal domain-like"/>
    <property type="match status" value="1"/>
</dbReference>
<dbReference type="PROSITE" id="PS50035">
    <property type="entry name" value="PLD"/>
    <property type="match status" value="1"/>
</dbReference>
<gene>
    <name evidence="1" type="primary">ppk</name>
    <name type="ordered locus">b2501</name>
    <name type="ordered locus">JW2486</name>
</gene>
<feature type="initiator methionine" description="Removed">
    <location>
        <position position="1"/>
    </location>
</feature>
<feature type="chain" id="PRO_0000128640" description="Polyphosphate kinase">
    <location>
        <begin position="2"/>
        <end position="688"/>
    </location>
</feature>
<feature type="domain" description="PLD phosphodiesterase" evidence="1">
    <location>
        <begin position="430"/>
        <end position="464"/>
    </location>
</feature>
<feature type="active site" description="Phosphohistidine intermediate" evidence="1 5 7">
    <location>
        <position position="435"/>
    </location>
</feature>
<feature type="binding site" evidence="1 9">
    <location>
        <position position="45"/>
    </location>
    <ligand>
        <name>ATP</name>
        <dbReference type="ChEBI" id="CHEBI:30616"/>
    </ligand>
</feature>
<feature type="binding site" evidence="1 9">
    <location>
        <position position="375"/>
    </location>
    <ligand>
        <name>Mg(2+)</name>
        <dbReference type="ChEBI" id="CHEBI:18420"/>
    </ligand>
</feature>
<feature type="binding site" evidence="1 9">
    <location>
        <position position="405"/>
    </location>
    <ligand>
        <name>Mg(2+)</name>
        <dbReference type="ChEBI" id="CHEBI:18420"/>
    </ligand>
</feature>
<feature type="binding site" evidence="1 9">
    <location>
        <position position="468"/>
    </location>
    <ligand>
        <name>ATP</name>
        <dbReference type="ChEBI" id="CHEBI:30616"/>
    </ligand>
</feature>
<feature type="binding site" evidence="1 9">
    <location>
        <position position="564"/>
    </location>
    <ligand>
        <name>ATP</name>
        <dbReference type="ChEBI" id="CHEBI:30616"/>
    </ligand>
</feature>
<feature type="binding site" evidence="1 9">
    <location>
        <position position="592"/>
    </location>
    <ligand>
        <name>ATP</name>
        <dbReference type="ChEBI" id="CHEBI:30616"/>
    </ligand>
</feature>
<feature type="mutagenesis site" description="Loss of enzyme activity." evidence="2">
    <original>R</original>
    <variation>A</variation>
    <location>
        <position position="375"/>
    </location>
</feature>
<feature type="mutagenesis site" description="Loss of enzyme activity." evidence="2">
    <original>S</original>
    <variation>A</variation>
    <location>
        <position position="380"/>
    </location>
</feature>
<feature type="mutagenesis site" description="No effect on enzyme activity." evidence="5">
    <original>H</original>
    <variation>Q</variation>
    <location>
        <position position="424"/>
    </location>
</feature>
<feature type="mutagenesis site" description="Loss of enzyme activity." evidence="5">
    <original>H</original>
    <variation>A</variation>
    <variation>Q</variation>
    <location>
        <position position="435"/>
    </location>
</feature>
<feature type="mutagenesis site" description="Loss of enzyme activity." evidence="5">
    <original>H</original>
    <variation>A</variation>
    <variation>Q</variation>
    <location>
        <position position="454"/>
    </location>
</feature>
<feature type="mutagenesis site" description="Loss of enzyme activity." evidence="2">
    <original>F</original>
    <variation>A</variation>
    <location>
        <position position="488"/>
    </location>
</feature>
<feature type="mutagenesis site" description="Loss of enzyme activity." evidence="2">
    <original>P</original>
    <variation>A</variation>
    <location>
        <position position="507"/>
    </location>
</feature>
<feature type="mutagenesis site" description="Loss of enzyme activity, but retains low autophosphorylation activity." evidence="2">
    <original>R</original>
    <variation>A</variation>
    <location>
        <position position="564"/>
    </location>
</feature>
<feature type="mutagenesis site" description="Slightly reduced enzyme activity." evidence="5">
    <original>H</original>
    <variation>Q</variation>
    <location>
        <position position="592"/>
    </location>
</feature>
<feature type="mutagenesis site" description="Loss of enzyme activity." evidence="2">
    <original>R</original>
    <variation>A</variation>
    <location>
        <position position="621"/>
    </location>
</feature>
<feature type="mutagenesis site" description="Loss of enzyme activity." evidence="2">
    <original>Q</original>
    <variation>A</variation>
    <location>
        <position position="674"/>
    </location>
</feature>
<feature type="helix" evidence="10">
    <location>
        <begin position="10"/>
        <end position="26"/>
    </location>
</feature>
<feature type="helix" evidence="10">
    <location>
        <begin position="32"/>
        <end position="51"/>
    </location>
</feature>
<feature type="helix" evidence="10">
    <location>
        <begin position="53"/>
        <end position="67"/>
    </location>
</feature>
<feature type="helix" evidence="10">
    <location>
        <begin position="73"/>
        <end position="103"/>
    </location>
</feature>
<feature type="turn" evidence="10">
    <location>
        <begin position="104"/>
        <end position="106"/>
    </location>
</feature>
<feature type="strand" evidence="10">
    <location>
        <begin position="108"/>
        <end position="110"/>
    </location>
</feature>
<feature type="helix" evidence="10">
    <location>
        <begin position="112"/>
        <end position="114"/>
    </location>
</feature>
<feature type="helix" evidence="10">
    <location>
        <begin position="119"/>
        <end position="130"/>
    </location>
</feature>
<feature type="helix" evidence="10">
    <location>
        <begin position="132"/>
        <end position="134"/>
    </location>
</feature>
<feature type="turn" evidence="10">
    <location>
        <begin position="146"/>
        <end position="149"/>
    </location>
</feature>
<feature type="strand" evidence="10">
    <location>
        <begin position="155"/>
        <end position="163"/>
    </location>
</feature>
<feature type="strand" evidence="10">
    <location>
        <begin position="166"/>
        <end position="173"/>
    </location>
</feature>
<feature type="turn" evidence="10">
    <location>
        <begin position="176"/>
        <end position="178"/>
    </location>
</feature>
<feature type="strand" evidence="10">
    <location>
        <begin position="181"/>
        <end position="184"/>
    </location>
</feature>
<feature type="strand" evidence="10">
    <location>
        <begin position="188"/>
        <end position="190"/>
    </location>
</feature>
<feature type="strand" evidence="10">
    <location>
        <begin position="195"/>
        <end position="198"/>
    </location>
</feature>
<feature type="helix" evidence="10">
    <location>
        <begin position="199"/>
        <end position="211"/>
    </location>
</feature>
<feature type="turn" evidence="10">
    <location>
        <begin position="212"/>
        <end position="214"/>
    </location>
</feature>
<feature type="strand" evidence="10">
    <location>
        <begin position="218"/>
        <end position="229"/>
    </location>
</feature>
<feature type="turn" evidence="10">
    <location>
        <begin position="235"/>
        <end position="238"/>
    </location>
</feature>
<feature type="strand" evidence="10">
    <location>
        <begin position="241"/>
        <end position="243"/>
    </location>
</feature>
<feature type="turn" evidence="10">
    <location>
        <begin position="253"/>
        <end position="255"/>
    </location>
</feature>
<feature type="strand" evidence="10">
    <location>
        <begin position="260"/>
        <end position="264"/>
    </location>
</feature>
<feature type="helix" evidence="10">
    <location>
        <begin position="270"/>
        <end position="279"/>
    </location>
</feature>
<feature type="strand" evidence="10">
    <location>
        <begin position="284"/>
        <end position="290"/>
    </location>
</feature>
<feature type="helix" evidence="10">
    <location>
        <begin position="297"/>
        <end position="302"/>
    </location>
</feature>
<feature type="helix" evidence="10">
    <location>
        <begin position="309"/>
        <end position="311"/>
    </location>
</feature>
<feature type="helix" evidence="10">
    <location>
        <begin position="322"/>
        <end position="325"/>
    </location>
</feature>
<feature type="helix" evidence="10">
    <location>
        <begin position="332"/>
        <end position="338"/>
    </location>
</feature>
<feature type="strand" evidence="10">
    <location>
        <begin position="341"/>
        <end position="345"/>
    </location>
</feature>
<feature type="helix" evidence="10">
    <location>
        <begin position="351"/>
        <end position="362"/>
    </location>
</feature>
<feature type="strand" evidence="10">
    <location>
        <begin position="366"/>
        <end position="375"/>
    </location>
</feature>
<feature type="helix" evidence="10">
    <location>
        <begin position="381"/>
        <end position="391"/>
    </location>
</feature>
<feature type="strand" evidence="10">
    <location>
        <begin position="395"/>
        <end position="400"/>
    </location>
</feature>
<feature type="turn" evidence="10">
    <location>
        <begin position="407"/>
        <end position="415"/>
    </location>
</feature>
<feature type="helix" evidence="10">
    <location>
        <begin position="416"/>
        <end position="420"/>
    </location>
</feature>
<feature type="strand" evidence="10">
    <location>
        <begin position="424"/>
        <end position="427"/>
    </location>
</feature>
<feature type="strand" evidence="10">
    <location>
        <begin position="437"/>
        <end position="445"/>
    </location>
</feature>
<feature type="strand" evidence="10">
    <location>
        <begin position="448"/>
        <end position="458"/>
    </location>
</feature>
<feature type="helix" evidence="10">
    <location>
        <begin position="464"/>
        <end position="466"/>
    </location>
</feature>
<feature type="strand" evidence="10">
    <location>
        <begin position="468"/>
        <end position="475"/>
    </location>
</feature>
<feature type="helix" evidence="10">
    <location>
        <begin position="478"/>
        <end position="492"/>
    </location>
</feature>
<feature type="strand" evidence="10">
    <location>
        <begin position="504"/>
        <end position="506"/>
    </location>
</feature>
<feature type="helix" evidence="10">
    <location>
        <begin position="510"/>
        <end position="526"/>
    </location>
</feature>
<feature type="strand" evidence="10">
    <location>
        <begin position="533"/>
        <end position="538"/>
    </location>
</feature>
<feature type="helix" evidence="10">
    <location>
        <begin position="543"/>
        <end position="554"/>
    </location>
</feature>
<feature type="strand" evidence="10">
    <location>
        <begin position="559"/>
        <end position="565"/>
    </location>
</feature>
<feature type="turn" evidence="10">
    <location>
        <begin position="574"/>
        <end position="576"/>
    </location>
</feature>
<feature type="strand" evidence="10">
    <location>
        <begin position="580"/>
        <end position="585"/>
    </location>
</feature>
<feature type="strand" evidence="10">
    <location>
        <begin position="587"/>
        <end position="591"/>
    </location>
</feature>
<feature type="strand" evidence="10">
    <location>
        <begin position="595"/>
        <end position="598"/>
    </location>
</feature>
<feature type="helix" evidence="10">
    <location>
        <begin position="600"/>
        <end position="602"/>
    </location>
</feature>
<feature type="strand" evidence="10">
    <location>
        <begin position="605"/>
        <end position="610"/>
    </location>
</feature>
<feature type="helix" evidence="10">
    <location>
        <begin position="615"/>
        <end position="619"/>
    </location>
</feature>
<feature type="strand" evidence="10">
    <location>
        <begin position="620"/>
        <end position="627"/>
    </location>
</feature>
<feature type="helix" evidence="10">
    <location>
        <begin position="631"/>
        <end position="645"/>
    </location>
</feature>
<feature type="strand" evidence="10">
    <location>
        <begin position="649"/>
        <end position="653"/>
    </location>
</feature>
<feature type="helix" evidence="10">
    <location>
        <begin position="673"/>
        <end position="684"/>
    </location>
</feature>
<evidence type="ECO:0000255" key="1">
    <source>
        <dbReference type="HAMAP-Rule" id="MF_00347"/>
    </source>
</evidence>
<evidence type="ECO:0000269" key="2">
    <source>
    </source>
</evidence>
<evidence type="ECO:0000269" key="3">
    <source>
    </source>
</evidence>
<evidence type="ECO:0000269" key="4">
    <source>
    </source>
</evidence>
<evidence type="ECO:0000269" key="5">
    <source>
    </source>
</evidence>
<evidence type="ECO:0000305" key="6"/>
<evidence type="ECO:0000305" key="7">
    <source>
    </source>
</evidence>
<evidence type="ECO:0007744" key="8">
    <source>
        <dbReference type="PDB" id="1XDO"/>
    </source>
</evidence>
<evidence type="ECO:0007744" key="9">
    <source>
        <dbReference type="PDB" id="1XDP"/>
    </source>
</evidence>
<evidence type="ECO:0007829" key="10">
    <source>
        <dbReference type="PDB" id="1XDP"/>
    </source>
</evidence>
<name>PPK1_ECOLI</name>
<accession>P0A7B1</accession>
<accession>P28688</accession>
<accession>Q47549</accession>